<sequence>MLLRTASSFSLLKANADHILPLPNSSSSGIIRYSQSLGKNLVPCATKDTNNRPLTGVVFEPFEEVKKELDLVPTVPQASLARQKYTDDCEATINEQINVEYNVSYVYHAMFAYFDRDNVALKGLAKFFKESSEEEREHAEKLMEYQNKRGGKVKLQSIVMPLSEFDHEEKGDALYAMELALSLEKLTNEKLLNLHSVASKNNDVQLADFIESEFLGEQVEAIKKISEYVAQLRRVGKGHGVWHFDQMLLHEEGVAA</sequence>
<dbReference type="EC" id="1.16.3.1"/>
<dbReference type="EMBL" id="AB062755">
    <property type="protein sequence ID" value="BAB64536.1"/>
    <property type="molecule type" value="mRNA"/>
</dbReference>
<dbReference type="RefSeq" id="NP_001237032.1">
    <property type="nucleotide sequence ID" value="NM_001250103.2"/>
</dbReference>
<dbReference type="SMR" id="Q948P6"/>
<dbReference type="FunCoup" id="Q948P6">
    <property type="interactions" value="658"/>
</dbReference>
<dbReference type="STRING" id="3847.Q948P6"/>
<dbReference type="PaxDb" id="3847-GLYMA11G35610.1"/>
<dbReference type="EnsemblPlants" id="KRH31181">
    <property type="protein sequence ID" value="KRH31181"/>
    <property type="gene ID" value="GLYMA_11G232600"/>
</dbReference>
<dbReference type="GeneID" id="547476"/>
<dbReference type="Gramene" id="KRH31181">
    <property type="protein sequence ID" value="KRH31181"/>
    <property type="gene ID" value="GLYMA_11G232600"/>
</dbReference>
<dbReference type="KEGG" id="gmx:547476"/>
<dbReference type="eggNOG" id="KOG2332">
    <property type="taxonomic scope" value="Eukaryota"/>
</dbReference>
<dbReference type="HOGENOM" id="CLU_065681_0_0_1"/>
<dbReference type="InParanoid" id="Q948P6"/>
<dbReference type="OMA" id="WNSAKDA"/>
<dbReference type="OrthoDB" id="186462at2759"/>
<dbReference type="Proteomes" id="UP000008827">
    <property type="component" value="Chromosome 11"/>
</dbReference>
<dbReference type="GO" id="GO:0009507">
    <property type="term" value="C:chloroplast"/>
    <property type="evidence" value="ECO:0007669"/>
    <property type="project" value="UniProtKB-SubCell"/>
</dbReference>
<dbReference type="GO" id="GO:0005737">
    <property type="term" value="C:cytoplasm"/>
    <property type="evidence" value="ECO:0000318"/>
    <property type="project" value="GO_Central"/>
</dbReference>
<dbReference type="GO" id="GO:0008199">
    <property type="term" value="F:ferric iron binding"/>
    <property type="evidence" value="ECO:0000318"/>
    <property type="project" value="GO_Central"/>
</dbReference>
<dbReference type="GO" id="GO:0008198">
    <property type="term" value="F:ferrous iron binding"/>
    <property type="evidence" value="ECO:0000318"/>
    <property type="project" value="GO_Central"/>
</dbReference>
<dbReference type="GO" id="GO:0004322">
    <property type="term" value="F:ferroxidase activity"/>
    <property type="evidence" value="ECO:0007669"/>
    <property type="project" value="UniProtKB-EC"/>
</dbReference>
<dbReference type="GO" id="GO:0006879">
    <property type="term" value="P:intracellular iron ion homeostasis"/>
    <property type="evidence" value="ECO:0007669"/>
    <property type="project" value="UniProtKB-KW"/>
</dbReference>
<dbReference type="GO" id="GO:0006826">
    <property type="term" value="P:iron ion transport"/>
    <property type="evidence" value="ECO:0007669"/>
    <property type="project" value="InterPro"/>
</dbReference>
<dbReference type="CDD" id="cd01056">
    <property type="entry name" value="Euk_Ferritin"/>
    <property type="match status" value="1"/>
</dbReference>
<dbReference type="FunFam" id="1.20.1260.10:FF:000006">
    <property type="entry name" value="Ferritin"/>
    <property type="match status" value="1"/>
</dbReference>
<dbReference type="Gene3D" id="1.20.1260.10">
    <property type="match status" value="1"/>
</dbReference>
<dbReference type="InterPro" id="IPR001519">
    <property type="entry name" value="Ferritin"/>
</dbReference>
<dbReference type="InterPro" id="IPR012347">
    <property type="entry name" value="Ferritin-like"/>
</dbReference>
<dbReference type="InterPro" id="IPR009040">
    <property type="entry name" value="Ferritin-like_diiron"/>
</dbReference>
<dbReference type="InterPro" id="IPR009078">
    <property type="entry name" value="Ferritin-like_SF"/>
</dbReference>
<dbReference type="InterPro" id="IPR014034">
    <property type="entry name" value="Ferritin_CS"/>
</dbReference>
<dbReference type="InterPro" id="IPR008331">
    <property type="entry name" value="Ferritin_DPS_dom"/>
</dbReference>
<dbReference type="PANTHER" id="PTHR11431">
    <property type="entry name" value="FERRITIN"/>
    <property type="match status" value="1"/>
</dbReference>
<dbReference type="PANTHER" id="PTHR11431:SF75">
    <property type="entry name" value="FERRITIN"/>
    <property type="match status" value="1"/>
</dbReference>
<dbReference type="Pfam" id="PF00210">
    <property type="entry name" value="Ferritin"/>
    <property type="match status" value="1"/>
</dbReference>
<dbReference type="SUPFAM" id="SSF47240">
    <property type="entry name" value="Ferritin-like"/>
    <property type="match status" value="1"/>
</dbReference>
<dbReference type="PROSITE" id="PS00204">
    <property type="entry name" value="FERRITIN_2"/>
    <property type="match status" value="1"/>
</dbReference>
<dbReference type="PROSITE" id="PS50905">
    <property type="entry name" value="FERRITIN_LIKE"/>
    <property type="match status" value="1"/>
</dbReference>
<comment type="function">
    <text evidence="1">Stores iron in a soluble, non-toxic, readily available form. Important for iron homeostasis. Has ferroxidase activity. Iron is taken up in the ferrous form and deposited as ferric hydroxides after oxidation (By similarity).</text>
</comment>
<comment type="catalytic activity">
    <reaction>
        <text>4 Fe(2+) + O2 + 4 H(+) = 4 Fe(3+) + 2 H2O</text>
        <dbReference type="Rhea" id="RHEA:11148"/>
        <dbReference type="ChEBI" id="CHEBI:15377"/>
        <dbReference type="ChEBI" id="CHEBI:15378"/>
        <dbReference type="ChEBI" id="CHEBI:15379"/>
        <dbReference type="ChEBI" id="CHEBI:29033"/>
        <dbReference type="ChEBI" id="CHEBI:29034"/>
        <dbReference type="EC" id="1.16.3.1"/>
    </reaction>
</comment>
<comment type="subunit">
    <text evidence="1">Oligomer of 24 subunits. There are two types of subunits: L (light) chain and H (heavy) chain. The major chain can be light or heavy, depending on the species and tissue type. The functional molecule forms a roughly spherical shell with a diameter of 12 nm and contains a central cavity into which the insoluble mineral iron core is deposited (By similarity).</text>
</comment>
<comment type="subcellular location">
    <subcellularLocation>
        <location evidence="1">Plastid</location>
        <location evidence="1">Chloroplast</location>
    </subcellularLocation>
</comment>
<comment type="similarity">
    <text evidence="4">Belongs to the ferritin family.</text>
</comment>
<organism>
    <name type="scientific">Glycine max</name>
    <name type="common">Soybean</name>
    <name type="synonym">Glycine hispida</name>
    <dbReference type="NCBI Taxonomy" id="3847"/>
    <lineage>
        <taxon>Eukaryota</taxon>
        <taxon>Viridiplantae</taxon>
        <taxon>Streptophyta</taxon>
        <taxon>Embryophyta</taxon>
        <taxon>Tracheophyta</taxon>
        <taxon>Spermatophyta</taxon>
        <taxon>Magnoliopsida</taxon>
        <taxon>eudicotyledons</taxon>
        <taxon>Gunneridae</taxon>
        <taxon>Pentapetalae</taxon>
        <taxon>rosids</taxon>
        <taxon>fabids</taxon>
        <taxon>Fabales</taxon>
        <taxon>Fabaceae</taxon>
        <taxon>Papilionoideae</taxon>
        <taxon>50 kb inversion clade</taxon>
        <taxon>NPAAA clade</taxon>
        <taxon>indigoferoid/millettioid clade</taxon>
        <taxon>Phaseoleae</taxon>
        <taxon>Glycine</taxon>
        <taxon>Glycine subgen. Soja</taxon>
    </lineage>
</organism>
<name>FRI3_SOYBN</name>
<reference key="1">
    <citation type="submission" date="2001-06" db="EMBL/GenBank/DDBJ databases">
        <title>Potential function displayed by the combination of several ferritin genes.</title>
        <authorList>
            <person name="Goto F."/>
            <person name="Masuda T."/>
            <person name="Yoshihara T."/>
        </authorList>
    </citation>
    <scope>NUCLEOTIDE SEQUENCE [MRNA]</scope>
</reference>
<keyword id="KW-0150">Chloroplast</keyword>
<keyword id="KW-0408">Iron</keyword>
<keyword id="KW-0409">Iron storage</keyword>
<keyword id="KW-0479">Metal-binding</keyword>
<keyword id="KW-0560">Oxidoreductase</keyword>
<keyword id="KW-0934">Plastid</keyword>
<keyword id="KW-1185">Reference proteome</keyword>
<keyword id="KW-0809">Transit peptide</keyword>
<protein>
    <recommendedName>
        <fullName>Ferritin-3, chloroplastic</fullName>
        <ecNumber>1.16.3.1</ecNumber>
    </recommendedName>
    <alternativeName>
        <fullName>SFerH-3</fullName>
    </alternativeName>
</protein>
<accession>Q948P6</accession>
<evidence type="ECO:0000250" key="1"/>
<evidence type="ECO:0000255" key="2"/>
<evidence type="ECO:0000255" key="3">
    <source>
        <dbReference type="PROSITE-ProRule" id="PRU00085"/>
    </source>
</evidence>
<evidence type="ECO:0000305" key="4"/>
<feature type="transit peptide" description="Chloroplast" evidence="2">
    <location>
        <begin position="1"/>
        <end position="49"/>
    </location>
</feature>
<feature type="chain" id="PRO_0000008866" description="Ferritin-3, chloroplastic">
    <location>
        <begin position="50"/>
        <end position="256"/>
    </location>
</feature>
<feature type="domain" description="Ferritin-like diiron" evidence="3">
    <location>
        <begin position="83"/>
        <end position="236"/>
    </location>
</feature>
<feature type="region of interest" description="Extension peptide (EP)">
    <location>
        <begin position="50"/>
        <end position="82"/>
    </location>
</feature>
<feature type="binding site" evidence="3">
    <location>
        <position position="100"/>
    </location>
    <ligand>
        <name>Fe cation</name>
        <dbReference type="ChEBI" id="CHEBI:24875"/>
        <label>1</label>
    </ligand>
</feature>
<feature type="binding site" evidence="3">
    <location>
        <position position="135"/>
    </location>
    <ligand>
        <name>Fe cation</name>
        <dbReference type="ChEBI" id="CHEBI:24875"/>
        <label>1</label>
    </ligand>
</feature>
<feature type="binding site" evidence="3">
    <location>
        <position position="135"/>
    </location>
    <ligand>
        <name>Fe cation</name>
        <dbReference type="ChEBI" id="CHEBI:24875"/>
        <label>2</label>
    </ligand>
</feature>
<feature type="binding site" evidence="3">
    <location>
        <position position="138"/>
    </location>
    <ligand>
        <name>Fe cation</name>
        <dbReference type="ChEBI" id="CHEBI:24875"/>
        <label>1</label>
    </ligand>
</feature>
<feature type="binding site" evidence="3">
    <location>
        <position position="184"/>
    </location>
    <ligand>
        <name>Fe cation</name>
        <dbReference type="ChEBI" id="CHEBI:24875"/>
        <label>2</label>
    </ligand>
</feature>
<feature type="binding site" evidence="3">
    <location>
        <position position="218"/>
    </location>
    <ligand>
        <name>Fe cation</name>
        <dbReference type="ChEBI" id="CHEBI:24875"/>
        <label>2</label>
    </ligand>
</feature>
<proteinExistence type="evidence at transcript level"/>